<feature type="initiator methionine" description="Removed" evidence="13">
    <location>
        <position position="1"/>
    </location>
</feature>
<feature type="chain" id="PRO_0000170752" description="Melibiose permease">
    <location>
        <begin position="2"/>
        <end position="473"/>
    </location>
</feature>
<feature type="topological domain" description="Cytoplasmic" evidence="5 14">
    <location>
        <begin position="2"/>
        <end position="16"/>
    </location>
</feature>
<feature type="transmembrane region" description="Helical" evidence="19">
    <location>
        <begin position="17"/>
        <end position="37"/>
    </location>
</feature>
<feature type="topological domain" description="Periplasmic" evidence="14">
    <location>
        <begin position="38"/>
        <end position="39"/>
    </location>
</feature>
<feature type="transmembrane region" description="Helical" evidence="19">
    <location>
        <begin position="40"/>
        <end position="60"/>
    </location>
</feature>
<feature type="topological domain" description="Cytoplasmic" evidence="14">
    <location>
        <begin position="61"/>
        <end position="77"/>
    </location>
</feature>
<feature type="transmembrane region" description="Helical" evidence="19">
    <location>
        <begin position="78"/>
        <end position="98"/>
    </location>
</feature>
<feature type="topological domain" description="Periplasmic" evidence="14">
    <location>
        <begin position="99"/>
        <end position="105"/>
    </location>
</feature>
<feature type="transmembrane region" description="Helical" evidence="19">
    <location>
        <begin position="106"/>
        <end position="126"/>
    </location>
</feature>
<feature type="topological domain" description="Cytoplasmic" evidence="14">
    <location>
        <begin position="127"/>
        <end position="150"/>
    </location>
</feature>
<feature type="transmembrane region" description="Helical" evidence="19">
    <location>
        <begin position="151"/>
        <end position="171"/>
    </location>
</feature>
<feature type="topological domain" description="Periplasmic" evidence="14">
    <location>
        <begin position="172"/>
        <end position="183"/>
    </location>
</feature>
<feature type="transmembrane region" description="Helical" evidence="19">
    <location>
        <begin position="184"/>
        <end position="204"/>
    </location>
</feature>
<feature type="topological domain" description="Cytoplasmic" evidence="14">
    <location>
        <begin position="205"/>
        <end position="232"/>
    </location>
</feature>
<feature type="transmembrane region" description="Helical" evidence="19">
    <location>
        <begin position="233"/>
        <end position="253"/>
    </location>
</feature>
<feature type="topological domain" description="Periplasmic" evidence="14">
    <location>
        <begin position="254"/>
        <end position="266"/>
    </location>
</feature>
<feature type="transmembrane region" description="Helical" evidence="19">
    <location>
        <begin position="267"/>
        <end position="287"/>
    </location>
</feature>
<feature type="topological domain" description="Cytoplasmic" evidence="14">
    <location>
        <begin position="288"/>
        <end position="296"/>
    </location>
</feature>
<feature type="transmembrane region" description="Helical" evidence="19">
    <location>
        <begin position="297"/>
        <end position="317"/>
    </location>
</feature>
<feature type="topological domain" description="Periplasmic" evidence="14">
    <location>
        <begin position="318"/>
        <end position="325"/>
    </location>
</feature>
<feature type="transmembrane region" description="Helical" evidence="19">
    <location>
        <begin position="326"/>
        <end position="346"/>
    </location>
</feature>
<feature type="topological domain" description="Cytoplasmic" evidence="14">
    <location>
        <begin position="347"/>
        <end position="378"/>
    </location>
</feature>
<feature type="transmembrane region" description="Helical" evidence="19">
    <location>
        <begin position="379"/>
        <end position="399"/>
    </location>
</feature>
<feature type="topological domain" description="Periplasmic" evidence="14">
    <location>
        <begin position="400"/>
        <end position="407"/>
    </location>
</feature>
<feature type="transmembrane region" description="Helical" evidence="19">
    <location>
        <begin position="408"/>
        <end position="428"/>
    </location>
</feature>
<feature type="topological domain" description="Cytoplasmic" evidence="4 5 14">
    <location>
        <begin position="429"/>
        <end position="473"/>
    </location>
</feature>
<feature type="site" description="Important for activity" evidence="18">
    <location>
        <position position="141"/>
    </location>
</feature>
<feature type="mutagenesis site" description="Abolishes transporter activity." evidence="1">
    <original>K</original>
    <variation>C</variation>
    <location>
        <position position="18"/>
    </location>
</feature>
<feature type="mutagenesis site" description="Abolishes transporter activity. Can bind Na(+). Large decrease in the affinity for melibiose in the presence of H(+)." evidence="1 8">
    <original>D</original>
    <variation>C</variation>
    <location>
        <position position="19"/>
    </location>
</feature>
<feature type="mutagenesis site" description="Abolishes transporter activity." evidence="1">
    <original>D</original>
    <variation>C</variation>
    <location>
        <position position="35"/>
    </location>
</feature>
<feature type="mutagenesis site" description="Abolishes transporter activity." evidence="1">
    <original>R</original>
    <variation>C</variation>
    <location>
        <position position="52"/>
    </location>
</feature>
<feature type="mutagenesis site" description="Abolishes transporter activity. Chemical restoration of the charge via the oxidation of the thiol to the sulfinic and/or sulfonic acid results in partial recovery of transporter activity. Does not bind Na(+). Binds melibiose in the presence of H(+)." evidence="1 8">
    <original>D</original>
    <variation>C</variation>
    <location>
        <position position="55"/>
    </location>
</feature>
<feature type="mutagenesis site" description="Loses ability to catalyze Na(+) or H(+)-coupled melibiose transport against a concentration gradient. Does not bind Na(+). Binds melibiose in the presence of H(+)." evidence="1 6 8">
    <original>D</original>
    <variation>C</variation>
    <location>
        <position position="59"/>
    </location>
</feature>
<feature type="mutagenesis site" description="Abolishes transporter activity. Chemical restoration of the charge via the oxidation of the thiol to the sulfinic and/or sulfonic acid results in partial recovery of transporter activity. Can bind Na(+), but structural changes induced by Na(+) are less complete and of smaller amplitude. Large decrease in the affinity for melibiose in the presence of H(+)." evidence="1 8">
    <original>D</original>
    <variation>C</variation>
    <location>
        <position position="124"/>
    </location>
</feature>
<feature type="mutagenesis site" description="Can transport melibiose." evidence="3">
    <original>K</original>
    <variation>C</variation>
    <location>
        <position position="138"/>
    </location>
</feature>
<feature type="mutagenesis site" description="Can transport melibiose." evidence="3">
    <original>R</original>
    <variation>C</variation>
    <location>
        <position position="139"/>
    </location>
</feature>
<feature type="mutagenesis site" description="Abolishes melibiose transport. Decreases affinity for melibiose." evidence="3">
    <original>R</original>
    <variation>C</variation>
    <variation>Q</variation>
    <location>
        <position position="141"/>
    </location>
</feature>
<feature type="mutagenesis site" description="Retains ion-coupled melibiose transport." evidence="3">
    <original>R</original>
    <variation>K</variation>
    <location>
        <position position="141"/>
    </location>
</feature>
<feature type="mutagenesis site" description="Abolishes melibiose transport." evidence="3">
    <original>R</original>
    <variation>C</variation>
    <location>
        <position position="149"/>
    </location>
</feature>
<feature type="mutagenesis site" description="Retains ion-coupled melibiose transport." evidence="3">
    <original>R</original>
    <variation>K</variation>
    <variation>Q</variation>
    <location>
        <position position="149"/>
    </location>
</feature>
<feature type="mutagenesis site" description="Does not affect transporter activity." evidence="1">
    <original>R</original>
    <variation>C</variation>
    <location>
        <position position="199"/>
    </location>
</feature>
<feature type="mutagenesis site" description="Does not affect transporter activity." evidence="1">
    <original>E</original>
    <variation>C</variation>
    <location>
        <position position="203"/>
    </location>
</feature>
<dbReference type="EMBL" id="K01991">
    <property type="protein sequence ID" value="AAA24148.1"/>
    <property type="status" value="ALT_INIT"/>
    <property type="molecule type" value="Genomic_DNA"/>
</dbReference>
<dbReference type="EMBL" id="U14003">
    <property type="protein sequence ID" value="AAA97020.1"/>
    <property type="status" value="ALT_INIT"/>
    <property type="molecule type" value="Genomic_DNA"/>
</dbReference>
<dbReference type="EMBL" id="U00096">
    <property type="protein sequence ID" value="AAC77081.2"/>
    <property type="molecule type" value="Genomic_DNA"/>
</dbReference>
<dbReference type="EMBL" id="AP009048">
    <property type="protein sequence ID" value="BAE78122.1"/>
    <property type="status" value="ALT_INIT"/>
    <property type="molecule type" value="Genomic_DNA"/>
</dbReference>
<dbReference type="PIR" id="A03421">
    <property type="entry name" value="BDEC"/>
</dbReference>
<dbReference type="RefSeq" id="NP_418544.2">
    <property type="nucleotide sequence ID" value="NC_000913.3"/>
</dbReference>
<dbReference type="RefSeq" id="WP_000028111.1">
    <property type="nucleotide sequence ID" value="NZ_SSZK01000018.1"/>
</dbReference>
<dbReference type="SMR" id="P02921"/>
<dbReference type="BioGRID" id="4263176">
    <property type="interactions" value="14"/>
</dbReference>
<dbReference type="DIP" id="DIP-10180N"/>
<dbReference type="FunCoup" id="P02921">
    <property type="interactions" value="323"/>
</dbReference>
<dbReference type="IntAct" id="P02921">
    <property type="interactions" value="1"/>
</dbReference>
<dbReference type="STRING" id="511145.b4120"/>
<dbReference type="PaxDb" id="511145-b4120"/>
<dbReference type="EnsemblBacteria" id="AAC77081">
    <property type="protein sequence ID" value="AAC77081"/>
    <property type="gene ID" value="b4120"/>
</dbReference>
<dbReference type="GeneID" id="948635"/>
<dbReference type="KEGG" id="ecj:JW4081"/>
<dbReference type="KEGG" id="eco:b4120"/>
<dbReference type="KEGG" id="ecoc:C3026_22265"/>
<dbReference type="PATRIC" id="fig|511145.12.peg.4251"/>
<dbReference type="EchoBASE" id="EB0573"/>
<dbReference type="eggNOG" id="COG2211">
    <property type="taxonomic scope" value="Bacteria"/>
</dbReference>
<dbReference type="HOGENOM" id="CLU_027408_0_3_6"/>
<dbReference type="InParanoid" id="P02921"/>
<dbReference type="OrthoDB" id="181905at2"/>
<dbReference type="PhylomeDB" id="P02921"/>
<dbReference type="BioCyc" id="EcoCyc:MELB-MONOMER"/>
<dbReference type="BioCyc" id="MetaCyc:MELB-MONOMER"/>
<dbReference type="PRO" id="PR:P02921"/>
<dbReference type="Proteomes" id="UP000000625">
    <property type="component" value="Chromosome"/>
</dbReference>
<dbReference type="GO" id="GO:0005886">
    <property type="term" value="C:plasma membrane"/>
    <property type="evidence" value="ECO:0000314"/>
    <property type="project" value="EcoCyc"/>
</dbReference>
<dbReference type="GO" id="GO:0015487">
    <property type="term" value="F:melibiose:monoatomic cation symporter activity"/>
    <property type="evidence" value="ECO:0000314"/>
    <property type="project" value="EcoCyc"/>
</dbReference>
<dbReference type="GO" id="GO:0043887">
    <property type="term" value="F:melibiose:sodium symporter activity"/>
    <property type="evidence" value="ECO:0000314"/>
    <property type="project" value="EcoCyc"/>
</dbReference>
<dbReference type="GO" id="GO:0015592">
    <property type="term" value="F:methylgalactoside transmembrane transporter activity"/>
    <property type="evidence" value="ECO:0000314"/>
    <property type="project" value="EcoCyc"/>
</dbReference>
<dbReference type="GO" id="GO:0015769">
    <property type="term" value="P:melibiose transport"/>
    <property type="evidence" value="ECO:0000314"/>
    <property type="project" value="EcoCyc"/>
</dbReference>
<dbReference type="GO" id="GO:0015765">
    <property type="term" value="P:methylgalactoside transport"/>
    <property type="evidence" value="ECO:0000314"/>
    <property type="project" value="EcoCyc"/>
</dbReference>
<dbReference type="GO" id="GO:0055085">
    <property type="term" value="P:transmembrane transport"/>
    <property type="evidence" value="ECO:0000318"/>
    <property type="project" value="GO_Central"/>
</dbReference>
<dbReference type="CDD" id="cd17332">
    <property type="entry name" value="MFS_MelB_like"/>
    <property type="match status" value="1"/>
</dbReference>
<dbReference type="FunFam" id="1.20.1250.20:FF:000258">
    <property type="entry name" value="Melibiose carrier protein"/>
    <property type="match status" value="1"/>
</dbReference>
<dbReference type="Gene3D" id="1.20.1250.20">
    <property type="entry name" value="MFS general substrate transporter like domains"/>
    <property type="match status" value="1"/>
</dbReference>
<dbReference type="InterPro" id="IPR039672">
    <property type="entry name" value="MFS_2"/>
</dbReference>
<dbReference type="InterPro" id="IPR036259">
    <property type="entry name" value="MFS_trans_sf"/>
</dbReference>
<dbReference type="InterPro" id="IPR001927">
    <property type="entry name" value="Na/Gal_symport"/>
</dbReference>
<dbReference type="InterPro" id="IPR018043">
    <property type="entry name" value="Na/Gal_symport_CS"/>
</dbReference>
<dbReference type="NCBIfam" id="TIGR00792">
    <property type="entry name" value="gph"/>
    <property type="match status" value="1"/>
</dbReference>
<dbReference type="NCBIfam" id="NF007749">
    <property type="entry name" value="PRK10429.1"/>
    <property type="match status" value="1"/>
</dbReference>
<dbReference type="PANTHER" id="PTHR11328">
    <property type="entry name" value="MAJOR FACILITATOR SUPERFAMILY DOMAIN-CONTAINING PROTEIN"/>
    <property type="match status" value="1"/>
</dbReference>
<dbReference type="PANTHER" id="PTHR11328:SF36">
    <property type="entry name" value="MELIBIOSE PERMEASE"/>
    <property type="match status" value="1"/>
</dbReference>
<dbReference type="Pfam" id="PF13347">
    <property type="entry name" value="MFS_2"/>
    <property type="match status" value="1"/>
</dbReference>
<dbReference type="SUPFAM" id="SSF103473">
    <property type="entry name" value="MFS general substrate transporter"/>
    <property type="match status" value="1"/>
</dbReference>
<dbReference type="PROSITE" id="PS00872">
    <property type="entry name" value="NA_GALACTOSIDE_SYMP"/>
    <property type="match status" value="1"/>
</dbReference>
<keyword id="KW-0997">Cell inner membrane</keyword>
<keyword id="KW-1003">Cell membrane</keyword>
<keyword id="KW-0903">Direct protein sequencing</keyword>
<keyword id="KW-0472">Membrane</keyword>
<keyword id="KW-1185">Reference proteome</keyword>
<keyword id="KW-0762">Sugar transport</keyword>
<keyword id="KW-0769">Symport</keyword>
<keyword id="KW-0812">Transmembrane</keyword>
<keyword id="KW-1133">Transmembrane helix</keyword>
<keyword id="KW-0813">Transport</keyword>
<proteinExistence type="evidence at protein level"/>
<comment type="function">
    <text evidence="9 10 11 12 13">Mediates the transport of melibiose and other galactosides by a symport mechanism (PubMed:2185831, PubMed:3311166, PubMed:3316227, PubMed:45782, PubMed:7703254). Can use sodium, lithium and protons as coupling cations, depending on the sugar substrate and the cationic environment (PubMed:3311166, PubMed:3316227, PubMed:45782, PubMed:7703254). Alpha-galactosides (melibiose, raffinose, p-nitrophenyl-alpha-galactoside or methyl-alpha-galactoside) are cotransported with either Na(+) or H(+), whereas beta-galactosides (lactose, L-arabinose-beta-D-galactoside, D-fructose-beta-D-galactoside, methyl-beta-galactoside or p-nitrophenyl-beta-galactoside) are cotransported with Na(+) or Li(+) but not H(+) (PubMed:3311166, PubMed:45782). The monosaccharide D-galactose can use either Na(+) or H(+) for cotransport whereas D-fucose, L-arabinose and D-galactosamine can use only Na(+) (PubMed:3311166).</text>
</comment>
<comment type="catalytic activity">
    <reaction evidence="10 11 12 13">
        <text>melibiose(in) + Na(+)(in) = melibiose(out) + Na(+)(out)</text>
        <dbReference type="Rhea" id="RHEA:28851"/>
        <dbReference type="ChEBI" id="CHEBI:28053"/>
        <dbReference type="ChEBI" id="CHEBI:29101"/>
    </reaction>
</comment>
<comment type="catalytic activity">
    <reaction evidence="11 13">
        <text>melibiose(in) + Li(+)(in) = melibiose(out) + Li(+)(out)</text>
        <dbReference type="Rhea" id="RHEA:28847"/>
        <dbReference type="ChEBI" id="CHEBI:28053"/>
        <dbReference type="ChEBI" id="CHEBI:49713"/>
    </reaction>
</comment>
<comment type="catalytic activity">
    <reaction evidence="9 10 11 12 13">
        <text>melibiose(in) + H(+)(in) = melibiose(out) + H(+)(out)</text>
        <dbReference type="Rhea" id="RHEA:28855"/>
        <dbReference type="ChEBI" id="CHEBI:15378"/>
        <dbReference type="ChEBI" id="CHEBI:28053"/>
    </reaction>
</comment>
<comment type="subunit">
    <text evidence="9 13">Monomer and homodimer.</text>
</comment>
<comment type="subcellular location">
    <subcellularLocation>
        <location evidence="5 13 14">Cell inner membrane</location>
        <topology evidence="5 14">Multi-pass membrane protein</topology>
    </subcellularLocation>
</comment>
<comment type="domain">
    <text evidence="2 3 7">Consists of two pseudosymmetrical 6-helix bundles lining an internal hydrophilic cavity, which faces the cytoplasmic side of the membrane and probably contains the binding sites for both cosubstrates (PubMed:12110569, PubMed:19706416). The cytoplasmic loop connecting the membrane-spanning segments 4 and 5 is close to the sugar binding site and may participate directly in cosubstrate translocation by MelB (PubMed:12421811). The charged residue Arg-141 is probably involved in the reaction of cosubstrate translocation or substrate release in the inner compartment (PubMed:12421811).</text>
</comment>
<comment type="similarity">
    <text evidence="17">Belongs to the sodium:galactoside symporter (TC 2.A.2) family.</text>
</comment>
<comment type="sequence caution" evidence="17">
    <conflict type="erroneous initiation">
        <sequence resource="EMBL-CDS" id="AAA24148"/>
    </conflict>
    <text>Truncated N-terminus.</text>
</comment>
<comment type="sequence caution" evidence="17">
    <conflict type="erroneous initiation">
        <sequence resource="EMBL-CDS" id="AAA97020"/>
    </conflict>
    <text>Truncated N-terminus.</text>
</comment>
<comment type="sequence caution" evidence="17">
    <conflict type="erroneous initiation">
        <sequence resource="EMBL-CDS" id="BAE78122"/>
    </conflict>
    <text>Truncated N-terminus.</text>
</comment>
<sequence>MSISMTTKLSYGFGAFGKDFAIGIVYMYLMYYYTDVVGLSVGLVGTLFLVARIWDAINDPIMGWIVNATRSRWGKFKPWILIGTLANSVILFLLFSAHLFEGTTQIVFVCVTYILWGMTYTIMDIPFWSLVPTITLDKREREQLVPYPRFFASLAGFVTAGVTLPFVNYVGGGDRGFGFQMFTLVLIAFFIVSTIITLRNVHEVFSSDNQPSAEGSHLTLKAIVALIYKNDQLSCLLGMALAYNVASNIITGFAIYYFSYVIGDADLFPYYLSYAGAANLVTLVFFPRLVKSLSRRILWAGASILPVLSCGVLLLMALMSYHNVVLIVIAGILLNVGTALFWVLQVIMVADIVDYGEYKLHVRCESIAYSVQTMVVKGGSAFAAFFIAVVLGMIGYVPNVEQSTQALLGMQFIMIALPTLFFMVTLILYFRFYRLNGDTLRRIQIHLLDKYRKVPPEPVHADIPVGAVSDVKA</sequence>
<protein>
    <recommendedName>
        <fullName evidence="15">Melibiose permease</fullName>
    </recommendedName>
    <alternativeName>
        <fullName evidence="16">Melibiose carrier</fullName>
    </alternativeName>
    <alternativeName>
        <fullName>Melibiose transporter</fullName>
    </alternativeName>
    <alternativeName>
        <fullName evidence="17">Melibiose/cation symporter</fullName>
    </alternativeName>
    <alternativeName>
        <fullName>Na+ (Li+)/melibiose symporter</fullName>
    </alternativeName>
    <alternativeName>
        <fullName>Thiomethylgalactoside permease II</fullName>
    </alternativeName>
</protein>
<organism>
    <name type="scientific">Escherichia coli (strain K12)</name>
    <dbReference type="NCBI Taxonomy" id="83333"/>
    <lineage>
        <taxon>Bacteria</taxon>
        <taxon>Pseudomonadati</taxon>
        <taxon>Pseudomonadota</taxon>
        <taxon>Gammaproteobacteria</taxon>
        <taxon>Enterobacterales</taxon>
        <taxon>Enterobacteriaceae</taxon>
        <taxon>Escherichia</taxon>
    </lineage>
</organism>
<name>MELB_ECOLI</name>
<evidence type="ECO:0000269" key="1">
    <source>
    </source>
</evidence>
<evidence type="ECO:0000269" key="2">
    <source>
    </source>
</evidence>
<evidence type="ECO:0000269" key="3">
    <source>
    </source>
</evidence>
<evidence type="ECO:0000269" key="4">
    <source>
    </source>
</evidence>
<evidence type="ECO:0000269" key="5">
    <source>
    </source>
</evidence>
<evidence type="ECO:0000269" key="6">
    <source>
    </source>
</evidence>
<evidence type="ECO:0000269" key="7">
    <source>
    </source>
</evidence>
<evidence type="ECO:0000269" key="8">
    <source>
    </source>
</evidence>
<evidence type="ECO:0000269" key="9">
    <source>
    </source>
</evidence>
<evidence type="ECO:0000269" key="10">
    <source>
    </source>
</evidence>
<evidence type="ECO:0000269" key="11">
    <source>
    </source>
</evidence>
<evidence type="ECO:0000269" key="12">
    <source>
    </source>
</evidence>
<evidence type="ECO:0000269" key="13">
    <source>
    </source>
</evidence>
<evidence type="ECO:0000269" key="14">
    <source>
    </source>
</evidence>
<evidence type="ECO:0000303" key="15">
    <source>
    </source>
</evidence>
<evidence type="ECO:0000303" key="16">
    <source>
    </source>
</evidence>
<evidence type="ECO:0000305" key="17"/>
<evidence type="ECO:0000305" key="18">
    <source>
    </source>
</evidence>
<evidence type="ECO:0000305" key="19">
    <source>
    </source>
</evidence>
<reference key="1">
    <citation type="journal article" date="1984" name="J. Biol. Chem.">
        <title>Nucleotide sequence of the melB gene and characteristics of deduced amino acid sequence of the melibiose carrier in Escherichia coli.</title>
        <authorList>
            <person name="Yazyu H."/>
            <person name="Shiota-Niiya S."/>
            <person name="Shimamoto T."/>
            <person name="Kanazawa H."/>
            <person name="Futai M."/>
            <person name="Tsuchiya T."/>
        </authorList>
    </citation>
    <scope>NUCLEOTIDE SEQUENCE [GENOMIC DNA]</scope>
</reference>
<reference key="2">
    <citation type="journal article" date="1995" name="Nucleic Acids Res.">
        <title>Analysis of the Escherichia coli genome VI: DNA sequence of the region from 92.8 through 100 minutes.</title>
        <authorList>
            <person name="Burland V.D."/>
            <person name="Plunkett G. III"/>
            <person name="Sofia H.J."/>
            <person name="Daniels D.L."/>
            <person name="Blattner F.R."/>
        </authorList>
    </citation>
    <scope>NUCLEOTIDE SEQUENCE [LARGE SCALE GENOMIC DNA]</scope>
    <source>
        <strain>K12 / MG1655 / ATCC 47076</strain>
    </source>
</reference>
<reference key="3">
    <citation type="journal article" date="1997" name="Science">
        <title>The complete genome sequence of Escherichia coli K-12.</title>
        <authorList>
            <person name="Blattner F.R."/>
            <person name="Plunkett G. III"/>
            <person name="Bloch C.A."/>
            <person name="Perna N.T."/>
            <person name="Burland V."/>
            <person name="Riley M."/>
            <person name="Collado-Vides J."/>
            <person name="Glasner J.D."/>
            <person name="Rode C.K."/>
            <person name="Mayhew G.F."/>
            <person name="Gregor J."/>
            <person name="Davis N.W."/>
            <person name="Kirkpatrick H.A."/>
            <person name="Goeden M.A."/>
            <person name="Rose D.J."/>
            <person name="Mau B."/>
            <person name="Shao Y."/>
        </authorList>
    </citation>
    <scope>NUCLEOTIDE SEQUENCE [LARGE SCALE GENOMIC DNA]</scope>
    <source>
        <strain>K12 / MG1655 / ATCC 47076</strain>
    </source>
</reference>
<reference key="4">
    <citation type="journal article" date="2006" name="Mol. Syst. Biol.">
        <title>Highly accurate genome sequences of Escherichia coli K-12 strains MG1655 and W3110.</title>
        <authorList>
            <person name="Hayashi K."/>
            <person name="Morooka N."/>
            <person name="Yamamoto Y."/>
            <person name="Fujita K."/>
            <person name="Isono K."/>
            <person name="Choi S."/>
            <person name="Ohtsubo E."/>
            <person name="Baba T."/>
            <person name="Wanner B.L."/>
            <person name="Mori H."/>
            <person name="Horiuchi T."/>
        </authorList>
    </citation>
    <scope>NUCLEOTIDE SEQUENCE [LARGE SCALE GENOMIC DNA]</scope>
    <source>
        <strain>K12 / W3110 / ATCC 27325 / DSM 5911</strain>
    </source>
</reference>
<reference key="5">
    <citation type="journal article" date="1995" name="Biochemistry">
        <title>Melibiose permease of Escherichia coli: large scale purification and evidence that H+, Na+, and Li+ sugar symport is catalyzed by a single polypeptide.</title>
        <authorList>
            <person name="Pourcher T."/>
            <person name="Leclercq S."/>
            <person name="Brandolin G."/>
            <person name="Leblanc G."/>
        </authorList>
    </citation>
    <scope>PROTEIN SEQUENCE OF 2-8</scope>
    <scope>FUNCTION</scope>
    <scope>CATALYTIC ACTIVITY</scope>
    <scope>SUBCELLULAR LOCATION</scope>
    <scope>SUBUNIT</scope>
</reference>
<reference key="6">
    <citation type="journal article" date="1978" name="Membr. Biochem.">
        <title>Cation-sugar cotransport in the melibiose transport system of Escherichia coli.</title>
        <authorList>
            <person name="Tsuchiya T."/>
            <person name="Wilson T.H."/>
        </authorList>
    </citation>
    <scope>FUNCTION</scope>
    <scope>CATALYTIC ACTIVITY</scope>
    <source>
        <strain>K12 / W3133</strain>
    </source>
</reference>
<reference key="7">
    <citation type="journal article" date="1987" name="Biochim. Biophys. Acta">
        <title>Cation specificity for sugar substrates of the melibiose carrier in Escherichia coli.</title>
        <authorList>
            <person name="Wilson D.M."/>
            <person name="Wilson T.H."/>
        </authorList>
    </citation>
    <scope>FUNCTION</scope>
    <scope>CATALYTIC ACTIVITY</scope>
</reference>
<reference key="8">
    <citation type="journal article" date="1987" name="J. Biol. Chem.">
        <title>Facilitated diffusion properties of melibiose permease in Escherichia coli membrane vesicles. Release of co-substrates is rate limiting for permease cycling.</title>
        <authorList>
            <person name="Bassilana M."/>
            <person name="Pourcher T."/>
            <person name="Leblanc G."/>
        </authorList>
    </citation>
    <scope>FUNCTION</scope>
    <scope>CATALYTIC ACTIVITY</scope>
</reference>
<reference key="9">
    <citation type="journal article" date="1990" name="Biochemistry">
        <title>Isolation and functional reconstitution of soluble melibiose permease from Escherichia coli.</title>
        <authorList>
            <person name="Roepe P.D."/>
            <person name="Kaback H.R."/>
        </authorList>
    </citation>
    <scope>FUNCTION</scope>
    <scope>CATALYTIC ACTIVITY</scope>
    <scope>SUBUNIT</scope>
</reference>
<reference key="10">
    <citation type="journal article" date="1991" name="Biochem. Biophys. Res. Commun.">
        <title>Melibiose permease of Escherichia coli: mutation of aspartic acid 55 in putative helix II abolishes activation of sugar binding by Na+ ions.</title>
        <authorList>
            <person name="Pourcher T."/>
            <person name="Deckert M."/>
            <person name="Bassilana M."/>
            <person name="Leblanc G."/>
        </authorList>
    </citation>
    <scope>MUTAGENESIS OF ASP-59</scope>
</reference>
<reference key="11">
    <citation type="journal article" date="1992" name="J. Biol. Chem.">
        <title>Membrane topology of the melibiose carrier of Escherichia coli.</title>
        <authorList>
            <person name="Botfield M.C."/>
            <person name="Noguchi K."/>
            <person name="Tsuchiya T."/>
            <person name="Wilson T.H."/>
        </authorList>
    </citation>
    <scope>SUBCELLULAR LOCATION</scope>
    <scope>TOPOLOGY</scope>
</reference>
<reference key="12">
    <citation type="journal article" date="1996" name="Biochemistry">
        <title>Membrane topology of the melibiose permease of Escherichia coli studied by melB-phoA fusion analysis.</title>
        <authorList>
            <person name="Pourcher T."/>
            <person name="Bibi E."/>
            <person name="Kaback H.R."/>
            <person name="Leblanc G."/>
        </authorList>
    </citation>
    <scope>SUBCELLULAR LOCATION</scope>
    <scope>TOPOLOGY</scope>
</reference>
<reference key="13">
    <citation type="journal article" date="2001" name="Biochem. Biophys. Res. Commun.">
        <title>The effect of modifications of the charged residues in the transmembrane helices on the transport activity of the melibiose carrier of Escherichia coli.</title>
        <authorList>
            <person name="Ding P.Z."/>
            <person name="Wilson T.H."/>
        </authorList>
    </citation>
    <scope>MUTAGENESIS OF LYS-18; ASP-19; ASP-35; ARG-52; ASP-55; ASP-59; ASP-124; ARG-199 AND GLU-203</scope>
</reference>
<reference key="14">
    <citation type="journal article" date="2002" name="EMBO J.">
        <title>Projection structure at 8 A resolution of the melibiose permease, an Na-sugar co-transporter from Escherichia coli.</title>
        <authorList>
            <person name="Hacksell I."/>
            <person name="Rigaud J.L."/>
            <person name="Purhonen P."/>
            <person name="Pourcher T."/>
            <person name="Hebert H."/>
            <person name="Leblanc G."/>
        </authorList>
    </citation>
    <scope>DOMAIN</scope>
    <scope>CRYSTALLIZATION</scope>
</reference>
<reference key="15">
    <citation type="journal article" date="2003" name="J. Biol. Chem.">
        <title>Cytoplasmic loop connecting helices IV and V of the melibiose permease from Escherichia coli is involved in the process of Na+-coupled sugar translocation.</title>
        <authorList>
            <person name="Abdel-Dayem M."/>
            <person name="Basquin C."/>
            <person name="Pourcher T."/>
            <person name="Cordat E."/>
            <person name="Leblanc G."/>
        </authorList>
    </citation>
    <scope>DOMAIN</scope>
    <scope>MUTAGENESIS OF LYS-138; ARG-139; ARG-141 AND ARG-149</scope>
</reference>
<reference key="16">
    <citation type="journal article" date="2005" name="Science">
        <title>Global topology analysis of the Escherichia coli inner membrane proteome.</title>
        <authorList>
            <person name="Daley D.O."/>
            <person name="Rapp M."/>
            <person name="Granseth E."/>
            <person name="Melen K."/>
            <person name="Drew D."/>
            <person name="von Heijne G."/>
        </authorList>
    </citation>
    <scope>TOPOLOGY [LARGE SCALE ANALYSIS]</scope>
    <source>
        <strain>K12 / MG1655 / ATCC 47076</strain>
    </source>
</reference>
<reference key="17">
    <citation type="journal article" date="2009" name="Proc. Natl. Acad. Sci. U.S.A.">
        <title>A 3D structure model of the melibiose permease of Escherichia coli represents a distinctive fold for Na+ symporters.</title>
        <authorList>
            <person name="Yousef M.S."/>
            <person name="Guan L."/>
        </authorList>
    </citation>
    <scope>DOMAIN</scope>
    <scope>PROTEIN MODEL</scope>
</reference>
<reference key="18">
    <citation type="journal article" date="2010" name="Proc. Natl. Acad. Sci. U.S.A.">
        <title>Structural insights into the activation mechanism of melibiose permease by sodium binding.</title>
        <authorList>
            <person name="Granell M."/>
            <person name="Leon X."/>
            <person name="Leblanc G."/>
            <person name="Padros E."/>
            <person name="Lorenz-Fonfria V.A."/>
        </authorList>
    </citation>
    <scope>MUTAGENESIS OF ASP-19; ASP-55; ASP-59 AND ASP-124</scope>
    <scope>PROTEIN MODEL</scope>
</reference>
<gene>
    <name evidence="16" type="primary">melB</name>
    <name type="synonym">mel-4</name>
    <name type="ordered locus">b4120</name>
    <name type="ordered locus">JW4081</name>
</gene>
<accession>P02921</accession>
<accession>Q2M6I4</accession>